<comment type="subcellular location">
    <subcellularLocation>
        <location evidence="4">Membrane</location>
        <topology evidence="4">Single-pass type I membrane protein</topology>
    </subcellularLocation>
</comment>
<feature type="signal peptide" evidence="2">
    <location>
        <begin position="1"/>
        <end position="49"/>
    </location>
</feature>
<feature type="chain" id="PRO_0000019581" description="Keratinocyte-associated transmembrane protein 2">
    <location>
        <begin position="50"/>
        <end position="265"/>
    </location>
</feature>
<feature type="topological domain" description="Extracellular" evidence="2">
    <location>
        <begin position="50"/>
        <end position="196"/>
    </location>
</feature>
<feature type="transmembrane region" description="Helical" evidence="2">
    <location>
        <begin position="197"/>
        <end position="217"/>
    </location>
</feature>
<feature type="topological domain" description="Cytoplasmic" evidence="2">
    <location>
        <begin position="218"/>
        <end position="265"/>
    </location>
</feature>
<feature type="region of interest" description="Disordered" evidence="3">
    <location>
        <begin position="72"/>
        <end position="123"/>
    </location>
</feature>
<feature type="region of interest" description="Disordered" evidence="3">
    <location>
        <begin position="135"/>
        <end position="168"/>
    </location>
</feature>
<feature type="compositionally biased region" description="Polar residues" evidence="3">
    <location>
        <begin position="72"/>
        <end position="96"/>
    </location>
</feature>
<feature type="compositionally biased region" description="Acidic residues" evidence="3">
    <location>
        <begin position="114"/>
        <end position="123"/>
    </location>
</feature>
<feature type="modified residue" description="Phosphoserine" evidence="1">
    <location>
        <position position="229"/>
    </location>
</feature>
<feature type="modified residue" description="Phosphoserine" evidence="1">
    <location>
        <position position="256"/>
    </location>
</feature>
<feature type="glycosylation site" description="N-linked (GlcNAc...) asparagine" evidence="2">
    <location>
        <position position="75"/>
    </location>
</feature>
<keyword id="KW-0325">Glycoprotein</keyword>
<keyword id="KW-0472">Membrane</keyword>
<keyword id="KW-0597">Phosphoprotein</keyword>
<keyword id="KW-1185">Reference proteome</keyword>
<keyword id="KW-0732">Signal</keyword>
<keyword id="KW-0812">Transmembrane</keyword>
<keyword id="KW-1133">Transmembrane helix</keyword>
<reference key="1">
    <citation type="submission" date="2004-11" db="EMBL/GenBank/DDBJ databases">
        <authorList>
            <consortium name="The German cDNA consortium"/>
        </authorList>
    </citation>
    <scope>NUCLEOTIDE SEQUENCE [LARGE SCALE MRNA]</scope>
    <source>
        <tissue>Kidney</tissue>
    </source>
</reference>
<accession>Q5R5B8</accession>
<protein>
    <recommendedName>
        <fullName>Keratinocyte-associated transmembrane protein 2</fullName>
    </recommendedName>
</protein>
<proteinExistence type="evidence at transcript level"/>
<name>KCT2_PONAB</name>
<organism>
    <name type="scientific">Pongo abelii</name>
    <name type="common">Sumatran orangutan</name>
    <name type="synonym">Pongo pygmaeus abelii</name>
    <dbReference type="NCBI Taxonomy" id="9601"/>
    <lineage>
        <taxon>Eukaryota</taxon>
        <taxon>Metazoa</taxon>
        <taxon>Chordata</taxon>
        <taxon>Craniata</taxon>
        <taxon>Vertebrata</taxon>
        <taxon>Euteleostomi</taxon>
        <taxon>Mammalia</taxon>
        <taxon>Eutheria</taxon>
        <taxon>Euarchontoglires</taxon>
        <taxon>Primates</taxon>
        <taxon>Haplorrhini</taxon>
        <taxon>Catarrhini</taxon>
        <taxon>Hominidae</taxon>
        <taxon>Pongo</taxon>
    </lineage>
</organism>
<sequence>MAAAALKRMRGPAQAKLLPGSAIQALVGLARPLVLALLLVSAALSSVVSRTDSPSPTVLNSHISTPNVNALTHENQTKPSISQISTTLPPTMSTEKSGGASVAPHPSPTPLSQEEADNNEDPSIEEEDLLMLNSSPSTAKDTLDNGDYGEPDYDWTTGPRDDDESDDTLEENRGYVEIEQSVKSFKMPSSNIEEEDSHFFFHLIIFAFCIAVVYITYHNKRKIFLLVQSRKWRDGLCSKTVEYHRLDQNVNEAMPSLKITNDYTF</sequence>
<dbReference type="EMBL" id="CR860944">
    <property type="protein sequence ID" value="CAH93048.1"/>
    <property type="molecule type" value="mRNA"/>
</dbReference>
<dbReference type="RefSeq" id="NP_001126803.1">
    <property type="nucleotide sequence ID" value="NM_001133331.1"/>
</dbReference>
<dbReference type="FunCoup" id="Q5R5B8">
    <property type="interactions" value="1097"/>
</dbReference>
<dbReference type="STRING" id="9601.ENSPPYP00000017646"/>
<dbReference type="GlyCosmos" id="Q5R5B8">
    <property type="glycosylation" value="1 site, No reported glycans"/>
</dbReference>
<dbReference type="GeneID" id="100173807"/>
<dbReference type="KEGG" id="pon:100173807"/>
<dbReference type="CTD" id="101149386"/>
<dbReference type="eggNOG" id="ENOG502S2NF">
    <property type="taxonomic scope" value="Eukaryota"/>
</dbReference>
<dbReference type="InParanoid" id="Q5R5B8"/>
<dbReference type="OrthoDB" id="5846619at2759"/>
<dbReference type="Proteomes" id="UP000001595">
    <property type="component" value="Unplaced"/>
</dbReference>
<dbReference type="GO" id="GO:0016020">
    <property type="term" value="C:membrane"/>
    <property type="evidence" value="ECO:0007669"/>
    <property type="project" value="UniProtKB-SubCell"/>
</dbReference>
<dbReference type="InterPro" id="IPR037645">
    <property type="entry name" value="KCT2"/>
</dbReference>
<dbReference type="PANTHER" id="PTHR16502">
    <property type="entry name" value="KERATINOCYTE-ASSOCIATED TRANSMEMBRANE PROTEIN 2"/>
    <property type="match status" value="1"/>
</dbReference>
<dbReference type="PANTHER" id="PTHR16502:SF2">
    <property type="entry name" value="KERATINOCYTE-ASSOCIATED TRANSMEMBRANE PROTEIN 2"/>
    <property type="match status" value="1"/>
</dbReference>
<dbReference type="Pfam" id="PF17818">
    <property type="entry name" value="KCT2"/>
    <property type="match status" value="1"/>
</dbReference>
<evidence type="ECO:0000250" key="1">
    <source>
        <dbReference type="UniProtKB" id="Q8NC54"/>
    </source>
</evidence>
<evidence type="ECO:0000255" key="2"/>
<evidence type="ECO:0000256" key="3">
    <source>
        <dbReference type="SAM" id="MobiDB-lite"/>
    </source>
</evidence>
<evidence type="ECO:0000305" key="4"/>
<gene>
    <name type="primary">KCT2</name>
</gene>